<feature type="chain" id="PRO_0000219353" description="Enhancer of rudimentary homolog">
    <location>
        <begin position="1"/>
        <end position="104"/>
    </location>
</feature>
<feature type="sequence conflict" description="In Ref. 3; AAH71431." evidence="3" ref="3">
    <original>Y</original>
    <variation>C</variation>
    <location>
        <position position="82"/>
    </location>
</feature>
<proteinExistence type="inferred from homology"/>
<dbReference type="EMBL" id="U66872">
    <property type="protein sequence ID" value="AAC60097.1"/>
    <property type="molecule type" value="mRNA"/>
</dbReference>
<dbReference type="EMBL" id="AL929220">
    <property type="protein sequence ID" value="CAI21198.1"/>
    <property type="molecule type" value="Genomic_DNA"/>
</dbReference>
<dbReference type="EMBL" id="BC059528">
    <property type="protein sequence ID" value="AAH59528.1"/>
    <property type="molecule type" value="mRNA"/>
</dbReference>
<dbReference type="EMBL" id="BC071431">
    <property type="protein sequence ID" value="AAH71431.1"/>
    <property type="molecule type" value="mRNA"/>
</dbReference>
<dbReference type="RefSeq" id="NP_001258746.1">
    <property type="nucleotide sequence ID" value="NM_001271817.1"/>
</dbReference>
<dbReference type="RefSeq" id="XP_068071476.1">
    <property type="nucleotide sequence ID" value="XM_068215375.1"/>
</dbReference>
<dbReference type="SMR" id="Q98874"/>
<dbReference type="FunCoup" id="Q98874">
    <property type="interactions" value="2174"/>
</dbReference>
<dbReference type="STRING" id="7955.ENSDARP00000092749"/>
<dbReference type="PaxDb" id="7955-ENSDARP00000092749"/>
<dbReference type="Ensembl" id="ENSDART00000101974">
    <property type="protein sequence ID" value="ENSDARP00000092749"/>
    <property type="gene ID" value="ENSDARG00000032866"/>
</dbReference>
<dbReference type="GeneID" id="30475"/>
<dbReference type="KEGG" id="dre:30475"/>
<dbReference type="AGR" id="ZFIN:ZDB-GENE-990415-57"/>
<dbReference type="CTD" id="2079"/>
<dbReference type="ZFIN" id="ZDB-GENE-990415-57">
    <property type="gene designation" value="erh"/>
</dbReference>
<dbReference type="eggNOG" id="KOG1766">
    <property type="taxonomic scope" value="Eukaryota"/>
</dbReference>
<dbReference type="HOGENOM" id="CLU_125703_1_0_1"/>
<dbReference type="InParanoid" id="Q98874"/>
<dbReference type="OMA" id="ESRTWSD"/>
<dbReference type="OrthoDB" id="9925360at2759"/>
<dbReference type="PhylomeDB" id="Q98874"/>
<dbReference type="TreeFam" id="TF314568"/>
<dbReference type="PRO" id="PR:Q98874"/>
<dbReference type="Proteomes" id="UP000000437">
    <property type="component" value="Chromosome 20"/>
</dbReference>
<dbReference type="Bgee" id="ENSDARG00000032866">
    <property type="expression patterns" value="Expressed in early embryo and 28 other cell types or tissues"/>
</dbReference>
<dbReference type="GO" id="GO:0005634">
    <property type="term" value="C:nucleus"/>
    <property type="evidence" value="ECO:0007669"/>
    <property type="project" value="UniProtKB-SubCell"/>
</dbReference>
<dbReference type="FunFam" id="3.30.2260.10:FF:000001">
    <property type="entry name" value="Enhancer of rudimentary homolog"/>
    <property type="match status" value="1"/>
</dbReference>
<dbReference type="Gene3D" id="3.30.2260.10">
    <property type="entry name" value="Enhancer of rudimentary"/>
    <property type="match status" value="1"/>
</dbReference>
<dbReference type="InterPro" id="IPR035912">
    <property type="entry name" value="EHR_sf"/>
</dbReference>
<dbReference type="InterPro" id="IPR000781">
    <property type="entry name" value="ERH"/>
</dbReference>
<dbReference type="PANTHER" id="PTHR12373">
    <property type="entry name" value="ENHANCER OF RUDIMENTARY ERH"/>
    <property type="match status" value="1"/>
</dbReference>
<dbReference type="PANTHER" id="PTHR12373:SF0">
    <property type="entry name" value="ENHANCER OF RUDIMENTARY HOMOLOG"/>
    <property type="match status" value="1"/>
</dbReference>
<dbReference type="Pfam" id="PF01133">
    <property type="entry name" value="ER"/>
    <property type="match status" value="1"/>
</dbReference>
<dbReference type="PIRSF" id="PIRSF016393">
    <property type="entry name" value="Enh_rudimentary"/>
    <property type="match status" value="1"/>
</dbReference>
<dbReference type="SUPFAM" id="SSF143875">
    <property type="entry name" value="ERH-like"/>
    <property type="match status" value="1"/>
</dbReference>
<dbReference type="PROSITE" id="PS01290">
    <property type="entry name" value="ER"/>
    <property type="match status" value="1"/>
</dbReference>
<protein>
    <recommendedName>
        <fullName>Enhancer of rudimentary homolog</fullName>
    </recommendedName>
</protein>
<organism>
    <name type="scientific">Danio rerio</name>
    <name type="common">Zebrafish</name>
    <name type="synonym">Brachydanio rerio</name>
    <dbReference type="NCBI Taxonomy" id="7955"/>
    <lineage>
        <taxon>Eukaryota</taxon>
        <taxon>Metazoa</taxon>
        <taxon>Chordata</taxon>
        <taxon>Craniata</taxon>
        <taxon>Vertebrata</taxon>
        <taxon>Euteleostomi</taxon>
        <taxon>Actinopterygii</taxon>
        <taxon>Neopterygii</taxon>
        <taxon>Teleostei</taxon>
        <taxon>Ostariophysi</taxon>
        <taxon>Cypriniformes</taxon>
        <taxon>Danionidae</taxon>
        <taxon>Danioninae</taxon>
        <taxon>Danio</taxon>
    </lineage>
</organism>
<evidence type="ECO:0000250" key="1"/>
<evidence type="ECO:0000250" key="2">
    <source>
        <dbReference type="UniProtKB" id="P84090"/>
    </source>
</evidence>
<evidence type="ECO:0000305" key="3"/>
<gene>
    <name type="primary">erh</name>
    <name type="synonym">e(r)</name>
    <name type="ORF">zgc:86761</name>
</gene>
<name>ERH_DANRE</name>
<accession>Q98874</accession>
<accession>Q6IQH5</accession>
<comment type="function">
    <text evidence="1">May have a role in the cell cycle.</text>
</comment>
<comment type="subunit">
    <text evidence="1">Homodimer.</text>
</comment>
<comment type="subcellular location">
    <subcellularLocation>
        <location evidence="2">Nucleus</location>
    </subcellularLocation>
</comment>
<comment type="similarity">
    <text evidence="3">Belongs to the E(R) family.</text>
</comment>
<keyword id="KW-0131">Cell cycle</keyword>
<keyword id="KW-0539">Nucleus</keyword>
<keyword id="KW-1185">Reference proteome</keyword>
<sequence>MSHTILLVQPTKRPEGRTYADYESVNECMEGVCKMYEEHLKRMNPNSPSITYDISQLFDFVDDLADLSCLVYRADTQTYQPYNKDWIKEKIYVLLRRQAQQAGK</sequence>
<reference key="1">
    <citation type="journal article" date="1997" name="Gene">
        <title>The putative cell cycle gene, enhancer of rudimentary, encodes a highly conserved protein found in plants and animals.</title>
        <authorList>
            <person name="Gelsthorpe M."/>
            <person name="Pulumati M."/>
            <person name="McCallum C."/>
            <person name="Dang-Vu K."/>
            <person name="Tsubota S.I."/>
        </authorList>
    </citation>
    <scope>NUCLEOTIDE SEQUENCE [MRNA]</scope>
</reference>
<reference key="2">
    <citation type="journal article" date="2013" name="Nature">
        <title>The zebrafish reference genome sequence and its relationship to the human genome.</title>
        <authorList>
            <person name="Howe K."/>
            <person name="Clark M.D."/>
            <person name="Torroja C.F."/>
            <person name="Torrance J."/>
            <person name="Berthelot C."/>
            <person name="Muffato M."/>
            <person name="Collins J.E."/>
            <person name="Humphray S."/>
            <person name="McLaren K."/>
            <person name="Matthews L."/>
            <person name="McLaren S."/>
            <person name="Sealy I."/>
            <person name="Caccamo M."/>
            <person name="Churcher C."/>
            <person name="Scott C."/>
            <person name="Barrett J.C."/>
            <person name="Koch R."/>
            <person name="Rauch G.J."/>
            <person name="White S."/>
            <person name="Chow W."/>
            <person name="Kilian B."/>
            <person name="Quintais L.T."/>
            <person name="Guerra-Assuncao J.A."/>
            <person name="Zhou Y."/>
            <person name="Gu Y."/>
            <person name="Yen J."/>
            <person name="Vogel J.H."/>
            <person name="Eyre T."/>
            <person name="Redmond S."/>
            <person name="Banerjee R."/>
            <person name="Chi J."/>
            <person name="Fu B."/>
            <person name="Langley E."/>
            <person name="Maguire S.F."/>
            <person name="Laird G.K."/>
            <person name="Lloyd D."/>
            <person name="Kenyon E."/>
            <person name="Donaldson S."/>
            <person name="Sehra H."/>
            <person name="Almeida-King J."/>
            <person name="Loveland J."/>
            <person name="Trevanion S."/>
            <person name="Jones M."/>
            <person name="Quail M."/>
            <person name="Willey D."/>
            <person name="Hunt A."/>
            <person name="Burton J."/>
            <person name="Sims S."/>
            <person name="McLay K."/>
            <person name="Plumb B."/>
            <person name="Davis J."/>
            <person name="Clee C."/>
            <person name="Oliver K."/>
            <person name="Clark R."/>
            <person name="Riddle C."/>
            <person name="Elliot D."/>
            <person name="Threadgold G."/>
            <person name="Harden G."/>
            <person name="Ware D."/>
            <person name="Begum S."/>
            <person name="Mortimore B."/>
            <person name="Kerry G."/>
            <person name="Heath P."/>
            <person name="Phillimore B."/>
            <person name="Tracey A."/>
            <person name="Corby N."/>
            <person name="Dunn M."/>
            <person name="Johnson C."/>
            <person name="Wood J."/>
            <person name="Clark S."/>
            <person name="Pelan S."/>
            <person name="Griffiths G."/>
            <person name="Smith M."/>
            <person name="Glithero R."/>
            <person name="Howden P."/>
            <person name="Barker N."/>
            <person name="Lloyd C."/>
            <person name="Stevens C."/>
            <person name="Harley J."/>
            <person name="Holt K."/>
            <person name="Panagiotidis G."/>
            <person name="Lovell J."/>
            <person name="Beasley H."/>
            <person name="Henderson C."/>
            <person name="Gordon D."/>
            <person name="Auger K."/>
            <person name="Wright D."/>
            <person name="Collins J."/>
            <person name="Raisen C."/>
            <person name="Dyer L."/>
            <person name="Leung K."/>
            <person name="Robertson L."/>
            <person name="Ambridge K."/>
            <person name="Leongamornlert D."/>
            <person name="McGuire S."/>
            <person name="Gilderthorp R."/>
            <person name="Griffiths C."/>
            <person name="Manthravadi D."/>
            <person name="Nichol S."/>
            <person name="Barker G."/>
            <person name="Whitehead S."/>
            <person name="Kay M."/>
            <person name="Brown J."/>
            <person name="Murnane C."/>
            <person name="Gray E."/>
            <person name="Humphries M."/>
            <person name="Sycamore N."/>
            <person name="Barker D."/>
            <person name="Saunders D."/>
            <person name="Wallis J."/>
            <person name="Babbage A."/>
            <person name="Hammond S."/>
            <person name="Mashreghi-Mohammadi M."/>
            <person name="Barr L."/>
            <person name="Martin S."/>
            <person name="Wray P."/>
            <person name="Ellington A."/>
            <person name="Matthews N."/>
            <person name="Ellwood M."/>
            <person name="Woodmansey R."/>
            <person name="Clark G."/>
            <person name="Cooper J."/>
            <person name="Tromans A."/>
            <person name="Grafham D."/>
            <person name="Skuce C."/>
            <person name="Pandian R."/>
            <person name="Andrews R."/>
            <person name="Harrison E."/>
            <person name="Kimberley A."/>
            <person name="Garnett J."/>
            <person name="Fosker N."/>
            <person name="Hall R."/>
            <person name="Garner P."/>
            <person name="Kelly D."/>
            <person name="Bird C."/>
            <person name="Palmer S."/>
            <person name="Gehring I."/>
            <person name="Berger A."/>
            <person name="Dooley C.M."/>
            <person name="Ersan-Urun Z."/>
            <person name="Eser C."/>
            <person name="Geiger H."/>
            <person name="Geisler M."/>
            <person name="Karotki L."/>
            <person name="Kirn A."/>
            <person name="Konantz J."/>
            <person name="Konantz M."/>
            <person name="Oberlander M."/>
            <person name="Rudolph-Geiger S."/>
            <person name="Teucke M."/>
            <person name="Lanz C."/>
            <person name="Raddatz G."/>
            <person name="Osoegawa K."/>
            <person name="Zhu B."/>
            <person name="Rapp A."/>
            <person name="Widaa S."/>
            <person name="Langford C."/>
            <person name="Yang F."/>
            <person name="Schuster S.C."/>
            <person name="Carter N.P."/>
            <person name="Harrow J."/>
            <person name="Ning Z."/>
            <person name="Herrero J."/>
            <person name="Searle S.M."/>
            <person name="Enright A."/>
            <person name="Geisler R."/>
            <person name="Plasterk R.H."/>
            <person name="Lee C."/>
            <person name="Westerfield M."/>
            <person name="de Jong P.J."/>
            <person name="Zon L.I."/>
            <person name="Postlethwait J.H."/>
            <person name="Nusslein-Volhard C."/>
            <person name="Hubbard T.J."/>
            <person name="Roest Crollius H."/>
            <person name="Rogers J."/>
            <person name="Stemple D.L."/>
        </authorList>
    </citation>
    <scope>NUCLEOTIDE SEQUENCE [LARGE SCALE GENOMIC DNA]</scope>
    <source>
        <strain>Tuebingen</strain>
    </source>
</reference>
<reference key="3">
    <citation type="submission" date="2004-06" db="EMBL/GenBank/DDBJ databases">
        <authorList>
            <consortium name="NIH - Zebrafish Gene Collection (ZGC) project"/>
        </authorList>
    </citation>
    <scope>NUCLEOTIDE SEQUENCE [LARGE SCALE MRNA]</scope>
    <source>
        <tissue>Embryo</tissue>
        <tissue>Retina</tissue>
    </source>
</reference>